<sequence length="477" mass="52898">MSPQTETKASVGFKAGVKEYKLTYYTPEYQTKDTDILAAFRVTPQPGVPPEEAGAAVAAESSTGTWTTVWTDGLTSLDRYKGRCYRIERVVGEKDQYIAYVAYPLDLFEEGSVTNMFTSIVGNVFGFKALRALRLEDLRIPPAYVKTFQGPPHGIQVERDKLNKYGRPLLGCTIKPKLGLSAKNYGRAVYECLRGGLDFTKDDENVNSQPFMRWRDRFLFCAEALYKAQAETGEIKGHYLNATAGTCEEMIKRAVFARELGVPIVMHDYLTGGFTANTSLAHYCRDNGLLLHIHRAMHAVIDRQKNHGIHFRVLAKALRMSGGDHIHSGTVVGKLEGERDITLGFVDLLRDDFVEQDRSRGIYFTQDWVSLPGVLPVASGGIHVWHMPALTEIFGDDSVLQFGGGTLGHPWGNAPGAVANRVALEACVKARNEGRDLAQEGNEIIREACKWSPELAAACEVWKEIVFNFAAVDVLDK</sequence>
<keyword id="KW-0007">Acetylation</keyword>
<keyword id="KW-0113">Calvin cycle</keyword>
<keyword id="KW-0120">Carbon dioxide fixation</keyword>
<keyword id="KW-0150">Chloroplast</keyword>
<keyword id="KW-1015">Disulfide bond</keyword>
<keyword id="KW-0456">Lyase</keyword>
<keyword id="KW-0460">Magnesium</keyword>
<keyword id="KW-0479">Metal-binding</keyword>
<keyword id="KW-0488">Methylation</keyword>
<keyword id="KW-0503">Monooxygenase</keyword>
<keyword id="KW-0560">Oxidoreductase</keyword>
<keyword id="KW-0601">Photorespiration</keyword>
<keyword id="KW-0602">Photosynthesis</keyword>
<keyword id="KW-0934">Plastid</keyword>
<keyword id="KW-1185">Reference proteome</keyword>
<name>RBL_NICSY</name>
<dbReference type="EC" id="4.1.1.39" evidence="1"/>
<dbReference type="EMBL" id="AB237912">
    <property type="protein sequence ID" value="BAE46659.1"/>
    <property type="molecule type" value="Genomic_DNA"/>
</dbReference>
<dbReference type="RefSeq" id="YP_358684.1">
    <property type="nucleotide sequence ID" value="NC_007500.1"/>
</dbReference>
<dbReference type="SMR" id="Q3C1J4"/>
<dbReference type="GeneID" id="3735077"/>
<dbReference type="KEGG" id="nsy:3735077"/>
<dbReference type="OrthoDB" id="18388at4085"/>
<dbReference type="Proteomes" id="UP000189701">
    <property type="component" value="Chloroplast Pltd"/>
</dbReference>
<dbReference type="GO" id="GO:0009507">
    <property type="term" value="C:chloroplast"/>
    <property type="evidence" value="ECO:0007669"/>
    <property type="project" value="UniProtKB-SubCell"/>
</dbReference>
<dbReference type="GO" id="GO:0000287">
    <property type="term" value="F:magnesium ion binding"/>
    <property type="evidence" value="ECO:0007669"/>
    <property type="project" value="UniProtKB-UniRule"/>
</dbReference>
<dbReference type="GO" id="GO:0004497">
    <property type="term" value="F:monooxygenase activity"/>
    <property type="evidence" value="ECO:0007669"/>
    <property type="project" value="UniProtKB-KW"/>
</dbReference>
<dbReference type="GO" id="GO:0016984">
    <property type="term" value="F:ribulose-bisphosphate carboxylase activity"/>
    <property type="evidence" value="ECO:0007669"/>
    <property type="project" value="UniProtKB-UniRule"/>
</dbReference>
<dbReference type="GO" id="GO:0009853">
    <property type="term" value="P:photorespiration"/>
    <property type="evidence" value="ECO:0007669"/>
    <property type="project" value="UniProtKB-KW"/>
</dbReference>
<dbReference type="GO" id="GO:0019253">
    <property type="term" value="P:reductive pentose-phosphate cycle"/>
    <property type="evidence" value="ECO:0007669"/>
    <property type="project" value="UniProtKB-UniRule"/>
</dbReference>
<dbReference type="CDD" id="cd08212">
    <property type="entry name" value="RuBisCO_large_I"/>
    <property type="match status" value="1"/>
</dbReference>
<dbReference type="FunFam" id="3.20.20.110:FF:000001">
    <property type="entry name" value="Ribulose bisphosphate carboxylase large chain"/>
    <property type="match status" value="1"/>
</dbReference>
<dbReference type="FunFam" id="3.30.70.150:FF:000001">
    <property type="entry name" value="Ribulose bisphosphate carboxylase large chain"/>
    <property type="match status" value="1"/>
</dbReference>
<dbReference type="Gene3D" id="3.20.20.110">
    <property type="entry name" value="Ribulose bisphosphate carboxylase, large subunit, C-terminal domain"/>
    <property type="match status" value="1"/>
</dbReference>
<dbReference type="Gene3D" id="3.30.70.150">
    <property type="entry name" value="RuBisCO large subunit, N-terminal domain"/>
    <property type="match status" value="1"/>
</dbReference>
<dbReference type="HAMAP" id="MF_01338">
    <property type="entry name" value="RuBisCO_L_type1"/>
    <property type="match status" value="1"/>
</dbReference>
<dbReference type="InterPro" id="IPR033966">
    <property type="entry name" value="RuBisCO"/>
</dbReference>
<dbReference type="InterPro" id="IPR020878">
    <property type="entry name" value="RuBisCo_large_chain_AS"/>
</dbReference>
<dbReference type="InterPro" id="IPR000685">
    <property type="entry name" value="RuBisCO_lsu_C"/>
</dbReference>
<dbReference type="InterPro" id="IPR036376">
    <property type="entry name" value="RuBisCO_lsu_C_sf"/>
</dbReference>
<dbReference type="InterPro" id="IPR017443">
    <property type="entry name" value="RuBisCO_lsu_fd_N"/>
</dbReference>
<dbReference type="InterPro" id="IPR036422">
    <property type="entry name" value="RuBisCO_lsu_N_sf"/>
</dbReference>
<dbReference type="InterPro" id="IPR020888">
    <property type="entry name" value="RuBisCO_lsuI"/>
</dbReference>
<dbReference type="NCBIfam" id="NF003252">
    <property type="entry name" value="PRK04208.1"/>
    <property type="match status" value="1"/>
</dbReference>
<dbReference type="PANTHER" id="PTHR42704">
    <property type="entry name" value="RIBULOSE BISPHOSPHATE CARBOXYLASE"/>
    <property type="match status" value="1"/>
</dbReference>
<dbReference type="PANTHER" id="PTHR42704:SF16">
    <property type="entry name" value="RIBULOSE BISPHOSPHATE CARBOXYLASE LARGE CHAIN"/>
    <property type="match status" value="1"/>
</dbReference>
<dbReference type="Pfam" id="PF00016">
    <property type="entry name" value="RuBisCO_large"/>
    <property type="match status" value="1"/>
</dbReference>
<dbReference type="Pfam" id="PF02788">
    <property type="entry name" value="RuBisCO_large_N"/>
    <property type="match status" value="1"/>
</dbReference>
<dbReference type="SFLD" id="SFLDG01052">
    <property type="entry name" value="RuBisCO"/>
    <property type="match status" value="1"/>
</dbReference>
<dbReference type="SFLD" id="SFLDS00014">
    <property type="entry name" value="RuBisCO"/>
    <property type="match status" value="1"/>
</dbReference>
<dbReference type="SFLD" id="SFLDG00301">
    <property type="entry name" value="RuBisCO-like_proteins"/>
    <property type="match status" value="1"/>
</dbReference>
<dbReference type="SUPFAM" id="SSF51649">
    <property type="entry name" value="RuBisCo, C-terminal domain"/>
    <property type="match status" value="1"/>
</dbReference>
<dbReference type="SUPFAM" id="SSF54966">
    <property type="entry name" value="RuBisCO, large subunit, small (N-terminal) domain"/>
    <property type="match status" value="1"/>
</dbReference>
<dbReference type="PROSITE" id="PS00157">
    <property type="entry name" value="RUBISCO_LARGE"/>
    <property type="match status" value="1"/>
</dbReference>
<feature type="propeptide" id="PRO_0000251422" evidence="1">
    <location>
        <begin position="1"/>
        <end position="2"/>
    </location>
</feature>
<feature type="chain" id="PRO_0000251423" description="Ribulose bisphosphate carboxylase large chain">
    <location>
        <begin position="3"/>
        <end position="477"/>
    </location>
</feature>
<feature type="active site" description="Proton acceptor" evidence="1">
    <location>
        <position position="175"/>
    </location>
</feature>
<feature type="active site" description="Proton acceptor" evidence="1">
    <location>
        <position position="294"/>
    </location>
</feature>
<feature type="binding site" description="in homodimeric partner" evidence="1">
    <location>
        <position position="123"/>
    </location>
    <ligand>
        <name>substrate</name>
    </ligand>
</feature>
<feature type="binding site" evidence="1">
    <location>
        <position position="173"/>
    </location>
    <ligand>
        <name>substrate</name>
    </ligand>
</feature>
<feature type="binding site" evidence="1">
    <location>
        <position position="177"/>
    </location>
    <ligand>
        <name>substrate</name>
    </ligand>
</feature>
<feature type="binding site" description="via carbamate group" evidence="1">
    <location>
        <position position="201"/>
    </location>
    <ligand>
        <name>Mg(2+)</name>
        <dbReference type="ChEBI" id="CHEBI:18420"/>
    </ligand>
</feature>
<feature type="binding site" evidence="1">
    <location>
        <position position="203"/>
    </location>
    <ligand>
        <name>Mg(2+)</name>
        <dbReference type="ChEBI" id="CHEBI:18420"/>
    </ligand>
</feature>
<feature type="binding site" evidence="1">
    <location>
        <position position="204"/>
    </location>
    <ligand>
        <name>Mg(2+)</name>
        <dbReference type="ChEBI" id="CHEBI:18420"/>
    </ligand>
</feature>
<feature type="binding site" evidence="1">
    <location>
        <position position="295"/>
    </location>
    <ligand>
        <name>substrate</name>
    </ligand>
</feature>
<feature type="binding site" evidence="1">
    <location>
        <position position="327"/>
    </location>
    <ligand>
        <name>substrate</name>
    </ligand>
</feature>
<feature type="binding site" evidence="1">
    <location>
        <position position="379"/>
    </location>
    <ligand>
        <name>substrate</name>
    </ligand>
</feature>
<feature type="site" description="Transition state stabilizer" evidence="1">
    <location>
        <position position="334"/>
    </location>
</feature>
<feature type="modified residue" description="N-acetylproline" evidence="1">
    <location>
        <position position="3"/>
    </location>
</feature>
<feature type="modified residue" description="N6,N6,N6-trimethyllysine" evidence="1">
    <location>
        <position position="14"/>
    </location>
</feature>
<feature type="modified residue" description="N6-carboxylysine" evidence="1">
    <location>
        <position position="201"/>
    </location>
</feature>
<feature type="disulfide bond" description="Interchain; in linked form" evidence="1">
    <location>
        <position position="247"/>
    </location>
</feature>
<organism>
    <name type="scientific">Nicotiana sylvestris</name>
    <name type="common">Wood tobacco</name>
    <name type="synonym">South American tobacco</name>
    <dbReference type="NCBI Taxonomy" id="4096"/>
    <lineage>
        <taxon>Eukaryota</taxon>
        <taxon>Viridiplantae</taxon>
        <taxon>Streptophyta</taxon>
        <taxon>Embryophyta</taxon>
        <taxon>Tracheophyta</taxon>
        <taxon>Spermatophyta</taxon>
        <taxon>Magnoliopsida</taxon>
        <taxon>eudicotyledons</taxon>
        <taxon>Gunneridae</taxon>
        <taxon>Pentapetalae</taxon>
        <taxon>asterids</taxon>
        <taxon>lamiids</taxon>
        <taxon>Solanales</taxon>
        <taxon>Solanaceae</taxon>
        <taxon>Nicotianoideae</taxon>
        <taxon>Nicotianeae</taxon>
        <taxon>Nicotiana</taxon>
    </lineage>
</organism>
<protein>
    <recommendedName>
        <fullName evidence="1">Ribulose bisphosphate carboxylase large chain</fullName>
        <shortName evidence="1">RuBisCO large subunit</shortName>
        <ecNumber evidence="1">4.1.1.39</ecNumber>
    </recommendedName>
</protein>
<accession>Q3C1J4</accession>
<evidence type="ECO:0000255" key="1">
    <source>
        <dbReference type="HAMAP-Rule" id="MF_01338"/>
    </source>
</evidence>
<comment type="function">
    <text evidence="1">RuBisCO catalyzes two reactions: the carboxylation of D-ribulose 1,5-bisphosphate, the primary event in carbon dioxide fixation, as well as the oxidative fragmentation of the pentose substrate in the photorespiration process. Both reactions occur simultaneously and in competition at the same active site.</text>
</comment>
<comment type="catalytic activity">
    <reaction evidence="1">
        <text>2 (2R)-3-phosphoglycerate + 2 H(+) = D-ribulose 1,5-bisphosphate + CO2 + H2O</text>
        <dbReference type="Rhea" id="RHEA:23124"/>
        <dbReference type="ChEBI" id="CHEBI:15377"/>
        <dbReference type="ChEBI" id="CHEBI:15378"/>
        <dbReference type="ChEBI" id="CHEBI:16526"/>
        <dbReference type="ChEBI" id="CHEBI:57870"/>
        <dbReference type="ChEBI" id="CHEBI:58272"/>
        <dbReference type="EC" id="4.1.1.39"/>
    </reaction>
</comment>
<comment type="catalytic activity">
    <reaction evidence="1">
        <text>D-ribulose 1,5-bisphosphate + O2 = 2-phosphoglycolate + (2R)-3-phosphoglycerate + 2 H(+)</text>
        <dbReference type="Rhea" id="RHEA:36631"/>
        <dbReference type="ChEBI" id="CHEBI:15378"/>
        <dbReference type="ChEBI" id="CHEBI:15379"/>
        <dbReference type="ChEBI" id="CHEBI:57870"/>
        <dbReference type="ChEBI" id="CHEBI:58033"/>
        <dbReference type="ChEBI" id="CHEBI:58272"/>
    </reaction>
</comment>
<comment type="cofactor">
    <cofactor evidence="1">
        <name>Mg(2+)</name>
        <dbReference type="ChEBI" id="CHEBI:18420"/>
    </cofactor>
    <text evidence="1">Binds 1 Mg(2+) ion per subunit.</text>
</comment>
<comment type="subunit">
    <text evidence="1">Heterohexadecamer of 8 large chains and 8 small chains; disulfide-linked. The disulfide link is formed within the large subunit homodimers.</text>
</comment>
<comment type="subcellular location">
    <subcellularLocation>
        <location>Plastid</location>
        <location>Chloroplast</location>
    </subcellularLocation>
</comment>
<comment type="PTM">
    <text evidence="1">The disulfide bond which can form in the large chain dimeric partners within the hexadecamer appears to be associated with oxidative stress and protein turnover.</text>
</comment>
<comment type="miscellaneous">
    <text evidence="1">The basic functional RuBisCO is composed of a large chain homodimer in a 'head-to-tail' conformation. In form I RuBisCO this homodimer is arranged in a barrel-like tetramer with the small subunits forming a tetrameric 'cap' on each end of the 'barrel'.</text>
</comment>
<comment type="similarity">
    <text evidence="1">Belongs to the RuBisCO large chain family. Type I subfamily.</text>
</comment>
<proteinExistence type="inferred from homology"/>
<geneLocation type="chloroplast"/>
<reference key="1">
    <citation type="journal article" date="2006" name="Mol. Genet. Genomics">
        <title>The chloroplast genome of Nicotiana sylvestris and Nicotiana tomentosiformis: complete sequencing confirms that the Nicotiana sylvestris progenitor is the maternal genome donor of Nicotiana tabacum.</title>
        <authorList>
            <person name="Yukawa M."/>
            <person name="Tsudzuki T."/>
            <person name="Sugiura M."/>
        </authorList>
    </citation>
    <scope>NUCLEOTIDE SEQUENCE [LARGE SCALE GENOMIC DNA]</scope>
</reference>
<gene>
    <name evidence="1" type="primary">rbcL</name>
</gene>